<dbReference type="EMBL" id="AP007232">
    <property type="protein sequence ID" value="BAE47615.1"/>
    <property type="molecule type" value="Genomic_DNA"/>
</dbReference>
<dbReference type="EMBL" id="DQ383816">
    <property type="protein sequence ID" value="ABD47254.1"/>
    <property type="molecule type" value="Genomic_DNA"/>
</dbReference>
<dbReference type="RefSeq" id="YP_398350.1">
    <property type="nucleotide sequence ID" value="NC_007578.1"/>
</dbReference>
<dbReference type="GeneID" id="3772833"/>
<dbReference type="KEGG" id="lsv:3772833"/>
<dbReference type="OrthoDB" id="361870at2759"/>
<dbReference type="GO" id="GO:0009507">
    <property type="term" value="C:chloroplast"/>
    <property type="evidence" value="ECO:0007669"/>
    <property type="project" value="UniProtKB-SubCell"/>
</dbReference>
<dbReference type="GO" id="GO:1990904">
    <property type="term" value="C:ribonucleoprotein complex"/>
    <property type="evidence" value="ECO:0007669"/>
    <property type="project" value="UniProtKB-KW"/>
</dbReference>
<dbReference type="GO" id="GO:0005840">
    <property type="term" value="C:ribosome"/>
    <property type="evidence" value="ECO:0007669"/>
    <property type="project" value="UniProtKB-KW"/>
</dbReference>
<dbReference type="GO" id="GO:0003735">
    <property type="term" value="F:structural constituent of ribosome"/>
    <property type="evidence" value="ECO:0007669"/>
    <property type="project" value="InterPro"/>
</dbReference>
<dbReference type="GO" id="GO:0006412">
    <property type="term" value="P:translation"/>
    <property type="evidence" value="ECO:0007669"/>
    <property type="project" value="UniProtKB-UniRule"/>
</dbReference>
<dbReference type="Gene3D" id="2.20.28.120">
    <property type="entry name" value="Ribosomal protein L33"/>
    <property type="match status" value="1"/>
</dbReference>
<dbReference type="HAMAP" id="MF_00294">
    <property type="entry name" value="Ribosomal_bL33"/>
    <property type="match status" value="1"/>
</dbReference>
<dbReference type="InterPro" id="IPR001705">
    <property type="entry name" value="Ribosomal_bL33"/>
</dbReference>
<dbReference type="InterPro" id="IPR018264">
    <property type="entry name" value="Ribosomal_bL33_CS"/>
</dbReference>
<dbReference type="InterPro" id="IPR038584">
    <property type="entry name" value="Ribosomal_bL33_sf"/>
</dbReference>
<dbReference type="InterPro" id="IPR011332">
    <property type="entry name" value="Ribosomal_zn-bd"/>
</dbReference>
<dbReference type="NCBIfam" id="NF001764">
    <property type="entry name" value="PRK00504.1"/>
    <property type="match status" value="1"/>
</dbReference>
<dbReference type="NCBIfam" id="NF001860">
    <property type="entry name" value="PRK00595.1"/>
    <property type="match status" value="1"/>
</dbReference>
<dbReference type="NCBIfam" id="TIGR01023">
    <property type="entry name" value="rpmG_bact"/>
    <property type="match status" value="1"/>
</dbReference>
<dbReference type="PANTHER" id="PTHR43168">
    <property type="entry name" value="50S RIBOSOMAL PROTEIN L33, CHLOROPLASTIC"/>
    <property type="match status" value="1"/>
</dbReference>
<dbReference type="PANTHER" id="PTHR43168:SF2">
    <property type="entry name" value="LARGE RIBOSOMAL SUBUNIT PROTEIN BL33C"/>
    <property type="match status" value="1"/>
</dbReference>
<dbReference type="Pfam" id="PF00471">
    <property type="entry name" value="Ribosomal_L33"/>
    <property type="match status" value="1"/>
</dbReference>
<dbReference type="SUPFAM" id="SSF57829">
    <property type="entry name" value="Zn-binding ribosomal proteins"/>
    <property type="match status" value="1"/>
</dbReference>
<dbReference type="PROSITE" id="PS00582">
    <property type="entry name" value="RIBOSOMAL_L33"/>
    <property type="match status" value="1"/>
</dbReference>
<organism>
    <name type="scientific">Lactuca sativa</name>
    <name type="common">Garden lettuce</name>
    <dbReference type="NCBI Taxonomy" id="4236"/>
    <lineage>
        <taxon>Eukaryota</taxon>
        <taxon>Viridiplantae</taxon>
        <taxon>Streptophyta</taxon>
        <taxon>Embryophyta</taxon>
        <taxon>Tracheophyta</taxon>
        <taxon>Spermatophyta</taxon>
        <taxon>Magnoliopsida</taxon>
        <taxon>eudicotyledons</taxon>
        <taxon>Gunneridae</taxon>
        <taxon>Pentapetalae</taxon>
        <taxon>asterids</taxon>
        <taxon>campanulids</taxon>
        <taxon>Asterales</taxon>
        <taxon>Asteraceae</taxon>
        <taxon>Cichorioideae</taxon>
        <taxon>Cichorieae</taxon>
        <taxon>Lactucinae</taxon>
        <taxon>Lactuca</taxon>
    </lineage>
</organism>
<proteinExistence type="inferred from homology"/>
<evidence type="ECO:0000255" key="1">
    <source>
        <dbReference type="HAMAP-Rule" id="MF_00294"/>
    </source>
</evidence>
<evidence type="ECO:0000305" key="2"/>
<name>RK33_LACSA</name>
<accession>Q332V7</accession>
<protein>
    <recommendedName>
        <fullName evidence="1">Large ribosomal subunit protein bL33c</fullName>
    </recommendedName>
    <alternativeName>
        <fullName evidence="2">50S ribosomal protein L33, chloroplastic</fullName>
    </alternativeName>
</protein>
<comment type="subcellular location">
    <subcellularLocation>
        <location>Plastid</location>
        <location>Chloroplast</location>
    </subcellularLocation>
</comment>
<comment type="similarity">
    <text evidence="1">Belongs to the bacterial ribosomal protein bL33 family.</text>
</comment>
<gene>
    <name evidence="1" type="primary">rpl33</name>
</gene>
<feature type="chain" id="PRO_0000276507" description="Large ribosomal subunit protein bL33c">
    <location>
        <begin position="1"/>
        <end position="68"/>
    </location>
</feature>
<sequence>MAKGKDVRIPVLLECTACVRNGVNVNKASTGISRYITQKNRHNTPNRLELRKFCPYCYKHTIHGEVKK</sequence>
<keyword id="KW-0150">Chloroplast</keyword>
<keyword id="KW-0934">Plastid</keyword>
<keyword id="KW-0687">Ribonucleoprotein</keyword>
<keyword id="KW-0689">Ribosomal protein</keyword>
<reference key="1">
    <citation type="journal article" date="2006" name="Transgenic Res.">
        <title>Efficient and stable transformation of Lactuca sativa L. cv. Cisco (lettuce) plastids.</title>
        <authorList>
            <person name="Kanamoto H."/>
            <person name="Yamashita A."/>
            <person name="Asao H."/>
            <person name="Okumura S."/>
            <person name="Takase H."/>
            <person name="Hattori M."/>
            <person name="Yokota A."/>
            <person name="Tomizawa K."/>
        </authorList>
    </citation>
    <scope>NUCLEOTIDE SEQUENCE [LARGE SCALE GENOMIC DNA]</scope>
    <source>
        <strain>cv. Cisco</strain>
    </source>
</reference>
<reference key="2">
    <citation type="submission" date="2006-01" db="EMBL/GenBank/DDBJ databases">
        <title>A comparison of the first two published chloroplast genomes in Asteraceae: Lactuca and Helianthus.</title>
        <authorList>
            <person name="Timme R.E."/>
            <person name="Kuehl J.V."/>
            <person name="Boore J.L."/>
            <person name="Jansen R.K."/>
        </authorList>
    </citation>
    <scope>NUCLEOTIDE SEQUENCE [LARGE SCALE GENOMIC DNA]</scope>
    <source>
        <strain>cv. Salinas</strain>
    </source>
</reference>
<geneLocation type="chloroplast"/>